<dbReference type="EC" id="3.6.5.-" evidence="1"/>
<dbReference type="EMBL" id="CP001196">
    <property type="protein sequence ID" value="ACI91751.1"/>
    <property type="molecule type" value="Genomic_DNA"/>
</dbReference>
<dbReference type="EMBL" id="CP002826">
    <property type="protein sequence ID" value="AEI08011.1"/>
    <property type="molecule type" value="Genomic_DNA"/>
</dbReference>
<dbReference type="SMR" id="B6JD21"/>
<dbReference type="STRING" id="504832.OCA5_c33370"/>
<dbReference type="KEGG" id="oca:OCAR_4607"/>
<dbReference type="KEGG" id="ocg:OCA5_c33370"/>
<dbReference type="PATRIC" id="fig|504832.7.peg.3508"/>
<dbReference type="eggNOG" id="COG0536">
    <property type="taxonomic scope" value="Bacteria"/>
</dbReference>
<dbReference type="HOGENOM" id="CLU_011747_2_0_5"/>
<dbReference type="OrthoDB" id="9807318at2"/>
<dbReference type="Proteomes" id="UP000007730">
    <property type="component" value="Chromosome"/>
</dbReference>
<dbReference type="GO" id="GO:0005737">
    <property type="term" value="C:cytoplasm"/>
    <property type="evidence" value="ECO:0007669"/>
    <property type="project" value="UniProtKB-SubCell"/>
</dbReference>
<dbReference type="GO" id="GO:0005525">
    <property type="term" value="F:GTP binding"/>
    <property type="evidence" value="ECO:0007669"/>
    <property type="project" value="UniProtKB-UniRule"/>
</dbReference>
<dbReference type="GO" id="GO:0003924">
    <property type="term" value="F:GTPase activity"/>
    <property type="evidence" value="ECO:0007669"/>
    <property type="project" value="UniProtKB-UniRule"/>
</dbReference>
<dbReference type="GO" id="GO:0000287">
    <property type="term" value="F:magnesium ion binding"/>
    <property type="evidence" value="ECO:0007669"/>
    <property type="project" value="InterPro"/>
</dbReference>
<dbReference type="GO" id="GO:0042254">
    <property type="term" value="P:ribosome biogenesis"/>
    <property type="evidence" value="ECO:0007669"/>
    <property type="project" value="UniProtKB-UniRule"/>
</dbReference>
<dbReference type="CDD" id="cd01898">
    <property type="entry name" value="Obg"/>
    <property type="match status" value="1"/>
</dbReference>
<dbReference type="FunFam" id="2.70.210.12:FF:000001">
    <property type="entry name" value="GTPase Obg"/>
    <property type="match status" value="1"/>
</dbReference>
<dbReference type="Gene3D" id="2.70.210.12">
    <property type="entry name" value="GTP1/OBG domain"/>
    <property type="match status" value="1"/>
</dbReference>
<dbReference type="Gene3D" id="3.40.50.300">
    <property type="entry name" value="P-loop containing nucleotide triphosphate hydrolases"/>
    <property type="match status" value="1"/>
</dbReference>
<dbReference type="HAMAP" id="MF_01454">
    <property type="entry name" value="GTPase_Obg"/>
    <property type="match status" value="1"/>
</dbReference>
<dbReference type="InterPro" id="IPR031167">
    <property type="entry name" value="G_OBG"/>
</dbReference>
<dbReference type="InterPro" id="IPR006073">
    <property type="entry name" value="GTP-bd"/>
</dbReference>
<dbReference type="InterPro" id="IPR014100">
    <property type="entry name" value="GTP-bd_Obg/CgtA"/>
</dbReference>
<dbReference type="InterPro" id="IPR006074">
    <property type="entry name" value="GTP1-OBG_CS"/>
</dbReference>
<dbReference type="InterPro" id="IPR006169">
    <property type="entry name" value="GTP1_OBG_dom"/>
</dbReference>
<dbReference type="InterPro" id="IPR036726">
    <property type="entry name" value="GTP1_OBG_dom_sf"/>
</dbReference>
<dbReference type="InterPro" id="IPR045086">
    <property type="entry name" value="OBG_GTPase"/>
</dbReference>
<dbReference type="InterPro" id="IPR027417">
    <property type="entry name" value="P-loop_NTPase"/>
</dbReference>
<dbReference type="NCBIfam" id="TIGR02729">
    <property type="entry name" value="Obg_CgtA"/>
    <property type="match status" value="1"/>
</dbReference>
<dbReference type="NCBIfam" id="NF008955">
    <property type="entry name" value="PRK12297.1"/>
    <property type="match status" value="1"/>
</dbReference>
<dbReference type="NCBIfam" id="NF008956">
    <property type="entry name" value="PRK12299.1"/>
    <property type="match status" value="1"/>
</dbReference>
<dbReference type="PANTHER" id="PTHR11702">
    <property type="entry name" value="DEVELOPMENTALLY REGULATED GTP-BINDING PROTEIN-RELATED"/>
    <property type="match status" value="1"/>
</dbReference>
<dbReference type="PANTHER" id="PTHR11702:SF31">
    <property type="entry name" value="MITOCHONDRIAL RIBOSOME-ASSOCIATED GTPASE 2"/>
    <property type="match status" value="1"/>
</dbReference>
<dbReference type="Pfam" id="PF01018">
    <property type="entry name" value="GTP1_OBG"/>
    <property type="match status" value="1"/>
</dbReference>
<dbReference type="Pfam" id="PF01926">
    <property type="entry name" value="MMR_HSR1"/>
    <property type="match status" value="1"/>
</dbReference>
<dbReference type="PIRSF" id="PIRSF002401">
    <property type="entry name" value="GTP_bd_Obg/CgtA"/>
    <property type="match status" value="1"/>
</dbReference>
<dbReference type="PRINTS" id="PR00326">
    <property type="entry name" value="GTP1OBG"/>
</dbReference>
<dbReference type="SUPFAM" id="SSF82051">
    <property type="entry name" value="Obg GTP-binding protein N-terminal domain"/>
    <property type="match status" value="1"/>
</dbReference>
<dbReference type="SUPFAM" id="SSF52540">
    <property type="entry name" value="P-loop containing nucleoside triphosphate hydrolases"/>
    <property type="match status" value="1"/>
</dbReference>
<dbReference type="PROSITE" id="PS51710">
    <property type="entry name" value="G_OBG"/>
    <property type="match status" value="1"/>
</dbReference>
<dbReference type="PROSITE" id="PS00905">
    <property type="entry name" value="GTP1_OBG"/>
    <property type="match status" value="1"/>
</dbReference>
<dbReference type="PROSITE" id="PS51883">
    <property type="entry name" value="OBG"/>
    <property type="match status" value="1"/>
</dbReference>
<protein>
    <recommendedName>
        <fullName evidence="1">GTPase Obg</fullName>
        <ecNumber evidence="1">3.6.5.-</ecNumber>
    </recommendedName>
    <alternativeName>
        <fullName evidence="1">GTP-binding protein Obg</fullName>
    </alternativeName>
</protein>
<reference key="1">
    <citation type="journal article" date="2008" name="J. Bacteriol.">
        <title>Genome sequence of the chemolithoautotrophic bacterium Oligotropha carboxidovorans OM5T.</title>
        <authorList>
            <person name="Paul D."/>
            <person name="Bridges S."/>
            <person name="Burgess S.C."/>
            <person name="Dandass Y."/>
            <person name="Lawrence M.L."/>
        </authorList>
    </citation>
    <scope>NUCLEOTIDE SEQUENCE [LARGE SCALE GENOMIC DNA]</scope>
    <source>
        <strain>ATCC 49405 / DSM 1227 / KCTC 32145 / OM5</strain>
    </source>
</reference>
<reference key="2">
    <citation type="journal article" date="2011" name="J. Bacteriol.">
        <title>Complete genome sequences of the chemolithoautotrophic Oligotropha carboxidovorans strains OM4 and OM5.</title>
        <authorList>
            <person name="Volland S."/>
            <person name="Rachinger M."/>
            <person name="Strittmatter A."/>
            <person name="Daniel R."/>
            <person name="Gottschalk G."/>
            <person name="Meyer O."/>
        </authorList>
    </citation>
    <scope>NUCLEOTIDE SEQUENCE [LARGE SCALE GENOMIC DNA]</scope>
    <source>
        <strain>ATCC 49405 / DSM 1227 / KCTC 32145 / OM5</strain>
    </source>
</reference>
<proteinExistence type="inferred from homology"/>
<keyword id="KW-0963">Cytoplasm</keyword>
<keyword id="KW-0342">GTP-binding</keyword>
<keyword id="KW-0378">Hydrolase</keyword>
<keyword id="KW-0460">Magnesium</keyword>
<keyword id="KW-0479">Metal-binding</keyword>
<keyword id="KW-0547">Nucleotide-binding</keyword>
<keyword id="KW-1185">Reference proteome</keyword>
<organism>
    <name type="scientific">Afipia carboxidovorans (strain ATCC 49405 / DSM 1227 / KCTC 32145 / OM5)</name>
    <name type="common">Oligotropha carboxidovorans</name>
    <dbReference type="NCBI Taxonomy" id="504832"/>
    <lineage>
        <taxon>Bacteria</taxon>
        <taxon>Pseudomonadati</taxon>
        <taxon>Pseudomonadota</taxon>
        <taxon>Alphaproteobacteria</taxon>
        <taxon>Hyphomicrobiales</taxon>
        <taxon>Nitrobacteraceae</taxon>
        <taxon>Afipia</taxon>
    </lineage>
</organism>
<evidence type="ECO:0000255" key="1">
    <source>
        <dbReference type="HAMAP-Rule" id="MF_01454"/>
    </source>
</evidence>
<evidence type="ECO:0000255" key="2">
    <source>
        <dbReference type="PROSITE-ProRule" id="PRU01231"/>
    </source>
</evidence>
<evidence type="ECO:0000256" key="3">
    <source>
        <dbReference type="SAM" id="MobiDB-lite"/>
    </source>
</evidence>
<feature type="chain" id="PRO_0000386102" description="GTPase Obg">
    <location>
        <begin position="1"/>
        <end position="356"/>
    </location>
</feature>
<feature type="domain" description="Obg" evidence="2">
    <location>
        <begin position="1"/>
        <end position="159"/>
    </location>
</feature>
<feature type="domain" description="OBG-type G" evidence="1">
    <location>
        <begin position="160"/>
        <end position="327"/>
    </location>
</feature>
<feature type="region of interest" description="Disordered" evidence="3">
    <location>
        <begin position="329"/>
        <end position="356"/>
    </location>
</feature>
<feature type="binding site" evidence="1">
    <location>
        <begin position="166"/>
        <end position="173"/>
    </location>
    <ligand>
        <name>GTP</name>
        <dbReference type="ChEBI" id="CHEBI:37565"/>
    </ligand>
</feature>
<feature type="binding site" evidence="1">
    <location>
        <position position="173"/>
    </location>
    <ligand>
        <name>Mg(2+)</name>
        <dbReference type="ChEBI" id="CHEBI:18420"/>
    </ligand>
</feature>
<feature type="binding site" evidence="1">
    <location>
        <begin position="191"/>
        <end position="195"/>
    </location>
    <ligand>
        <name>GTP</name>
        <dbReference type="ChEBI" id="CHEBI:37565"/>
    </ligand>
</feature>
<feature type="binding site" evidence="1">
    <location>
        <position position="193"/>
    </location>
    <ligand>
        <name>Mg(2+)</name>
        <dbReference type="ChEBI" id="CHEBI:18420"/>
    </ligand>
</feature>
<feature type="binding site" evidence="1">
    <location>
        <begin position="212"/>
        <end position="215"/>
    </location>
    <ligand>
        <name>GTP</name>
        <dbReference type="ChEBI" id="CHEBI:37565"/>
    </ligand>
</feature>
<feature type="binding site" evidence="1">
    <location>
        <begin position="279"/>
        <end position="282"/>
    </location>
    <ligand>
        <name>GTP</name>
        <dbReference type="ChEBI" id="CHEBI:37565"/>
    </ligand>
</feature>
<feature type="binding site" evidence="1">
    <location>
        <begin position="308"/>
        <end position="310"/>
    </location>
    <ligand>
        <name>GTP</name>
        <dbReference type="ChEBI" id="CHEBI:37565"/>
    </ligand>
</feature>
<comment type="function">
    <text evidence="1">An essential GTPase which binds GTP, GDP and possibly (p)ppGpp with moderate affinity, with high nucleotide exchange rates and a fairly low GTP hydrolysis rate. Plays a role in control of the cell cycle, stress response, ribosome biogenesis and in those bacteria that undergo differentiation, in morphogenesis control.</text>
</comment>
<comment type="cofactor">
    <cofactor evidence="1">
        <name>Mg(2+)</name>
        <dbReference type="ChEBI" id="CHEBI:18420"/>
    </cofactor>
</comment>
<comment type="subunit">
    <text evidence="1">Monomer.</text>
</comment>
<comment type="subcellular location">
    <subcellularLocation>
        <location evidence="1">Cytoplasm</location>
    </subcellularLocation>
</comment>
<comment type="similarity">
    <text evidence="1">Belongs to the TRAFAC class OBG-HflX-like GTPase superfamily. OBG GTPase family.</text>
</comment>
<gene>
    <name evidence="1" type="primary">obg</name>
    <name type="ordered locus">OCAR_4607</name>
    <name type="ordered locus">OCA5_c33370</name>
</gene>
<sequence length="356" mass="38402">MKFLDEAKVYIRSGDGGNGCVAFRREKFIEYGGPNGGNGGRGGDVIIETVDGLNTLIDYRYQQHFKAQKGGHGMGSDRHGAGGDDIVLKVPVGTQVFDEDRETLLHDFTRLGERFVIAKGGNGGFGNAHFKSSTNRAPRHANPGQPGEERWIWLRMKLIADAGLVGLPNAGKSTFLSVVSAAKPKIADYPFTTLHPQLGVVRSDGREFVLADIPGLIEGAHEGTGLGDRFLGHVERCRVLLHLVDATCEHAGKAYKIVRNELAAYEHDLTDKVEIVALNKIDAVTPEQLKEQKARLKRAAKQTPMLVSGVTGEGVPEVLRALTDVISEAPVSTKAKGEPTENETPPPSTGWSPLSN</sequence>
<accession>B6JD21</accession>
<accession>F8BTB9</accession>
<name>OBG_AFIC5</name>